<name>CNR1_FELCA</name>
<proteinExistence type="evidence at protein level"/>
<comment type="function">
    <text evidence="2 3 6">G-protein coupled receptor for endogenous cannabinoids (eCBs), including N-arachidonoylethanolamide (also called anandamide or AEA) and 2-arachidonoylglycerol (2-AG), as well as phytocannabinoids, such as delta(9)-tetrahydrocannabinol (THC). Mediates many cannabinoid-induced effects, acting, among others, on food intake, memory loss, gastrointestinal motility, catalepsy, ambulatory activity, anxiety, chronic pain. Signaling typically involves reduction in cyclic AMP (By similarity). In the hypothalamus, may have a dual effect on mitochondrial respiration depending upon the agonist dose and possibly upon the cell type. Increases respiration at low doses, while decreases respiration at high doses. At high doses, CNR1 signal transduction involves G-protein alpha-i protein activation and subsequent inhibition of mitochondrial soluble adenylate cyclase, decrease in cyclic AMP concentration, inhibition of protein kinase A (PKA)-dependent phosphorylation of specific subunits of the mitochondrial electron transport system, including NDUFS2. In the hypothalamus, inhibits leptin-induced reactive oxygen species (ROS) formation and mediates cannabinoid-induced increase in SREBF1 and FASN gene expression. In response to cannabinoids, drives the release of orexigenic beta-endorphin, not that of melanocyte-stimulating hormone alpha/alpha-MSH, from hypothalamic POMC neurons, hence promoting food intake. In the hippocampus, regulates cellular respiration and energy production in response to cannabinoids. Involved in cannabinoid-dependent depolarization-induced suppression of inhibition (DSI), a process in which depolarization of CA1 postsynaptic pyramidal neurons mobilizes eCBs, which retrogradely activate presynaptic CB1 receptors, transiently decreasing GABAergic inhibitory neurotransmission. Also reduces excitatory synaptic transmission (By similarity). In superior cervical ganglions and cerebral vascular smooth muscle cells, inhibits voltage-gated Ca(2+) channels in a constitutive, as well as agonist-dependent manner (PubMed:10362691). In cerebral vascular smooth muscle cells, inhibition of voltage-gated Ca(2+) channels leads to vasodilation and decrease in vascular tone (PubMed:10362691). Induces leptin production in adipocytes and reduces LRP2-mediated leptin clearance in the kidney, hence participating in hyperleptinemia. In adipose tissue, CNR1 signaling leads to increased expression of SREBF1, ACACA and FASN genes. In the liver, activation by endocannabinoids leads to increased de novo lipogenesis and reduced fatty acid catabolism, associated with increased expression of SREBF1/SREBP-1, GCK, ACACA, ACACB and FASN genes. May also affect de novo cholesterol synthesis and HDL-cholesteryl ether uptake. Peripherally modulates energy metabolism. In high carbohydrate diet-induced obesity, may decrease the expression of mitochondrial dihydrolipoyl dehydrogenase/DLD in striated muscles, as well as that of selected glucose/ pyruvate metabolic enzymes, hence affecting energy expenditure through mitochondrial metabolism. In response to cannabinoid anandamide, elicits a pro-inflammatory response in macrophages, which involves NLRP3 inflammasome activation and IL1B and IL18 secretion (By similarity). In macrophages infiltrating pancreatic islets, this process may participate in the progression of type-2 diabetes and associated loss of pancreatic beta-cells (By similarity).</text>
</comment>
<comment type="activity regulation">
    <text evidence="2">Hemopressin, a peptide derived from hemoglobin subunit alpha (HBA1 and/or HBA2), acts as an antagonist peptide: hemopressin-binding efficiently blocks cannabinoid receptor CNR1 and subsequent signaling.</text>
</comment>
<comment type="subunit">
    <text evidence="1 2">Interacts (via C-terminus) with CNRIP1; this interaction attenuates constitutive, but not agonist-dependent, inhibition of voltage-gated Ca(2+) channels in neurons (By similarity). Associates with G protein alpha subunits, including G(i) alpha-1/GNAI1, G(i) alpha-3/GNAI3 and G(o)-alpha/GNAO1; palmitoylation is important for interaction with GNAI3 and GNAO1 (By similarity).</text>
</comment>
<comment type="subcellular location">
    <subcellularLocation>
        <location evidence="2">Cell membrane</location>
        <topology evidence="2">Multi-pass membrane protein</topology>
    </subcellularLocation>
    <subcellularLocation>
        <location evidence="2">Membrane raft</location>
    </subcellularLocation>
    <subcellularLocation>
        <location evidence="3">Mitochondrion outer membrane</location>
    </subcellularLocation>
    <subcellularLocation>
        <location evidence="1">Cell projection</location>
        <location evidence="1">Axon</location>
    </subcellularLocation>
    <subcellularLocation>
        <location evidence="1">Presynapse</location>
    </subcellularLocation>
    <text evidence="1 3">Unexpectedly, in the mitochondria, the C-terminus is located in the mitochondrial intermembrane space, a compartment topologically considered as extracellular. In canonical seven-transmembrane G-protein coupled receptors, the C-terminus is cytosolic (By similarity). Found on presynaptic axon terminals in some GABAergic neurons in the somatosensory cortex (By similarity).</text>
</comment>
<comment type="tissue specificity">
    <text evidence="6">Expressed in cerebral arterial muscle cells and cerebral cortex (at protein level).</text>
</comment>
<comment type="PTM">
    <text evidence="2">Palmitoylation at Cys-415 is important for recruitment at plasma membrane and lipid rafts and association with G protein alpha subunits.</text>
</comment>
<comment type="similarity">
    <text evidence="5">Belongs to the G-protein coupled receptor 1 family.</text>
</comment>
<sequence>MKSILDGLADTTFRTITTDLLYVGSNDIQYEDIKGDMASKLGYFPQKFPLTSFRGSPFQEKMTAGDNSQLVPADQVNITEFYNKSLSSYKENEENIQCGENFMDMECFMILNPSQQLAIAVLSLTLGTFTVLENLLVLCVILHSRSLRCRPSYHFIGSLAVADLLGSVIFVYSFVDFHVFHRKDSPNVFLFKLGGVTASFTASVGSLFLTAIDRYISIHRPLAYKKIVTRPKAVVAFCLMWTIAIVIAVLPLLGWNCKKLQSVCSDIFPLIDETYLMFWIGVTSVLLLFIVYAYMYILWKAHIHAVRMIQRGTQKSIIIHTSEDGKVQVTRPDQARMDIRLAKTLVLILVVLIICWGPLLAIMVYDVFGKMNKLIKTVFAFCSMLCLLNSTVNPIIYALRSKDLRHAFRSMFPSCEGTAQPLDNSMGDSDCLHKHANNTANVHRAAENCIKNTVQIAKVTISVSTNTSAKAL</sequence>
<organism>
    <name type="scientific">Felis catus</name>
    <name type="common">Cat</name>
    <name type="synonym">Felis silvestris catus</name>
    <dbReference type="NCBI Taxonomy" id="9685"/>
    <lineage>
        <taxon>Eukaryota</taxon>
        <taxon>Metazoa</taxon>
        <taxon>Chordata</taxon>
        <taxon>Craniata</taxon>
        <taxon>Vertebrata</taxon>
        <taxon>Euteleostomi</taxon>
        <taxon>Mammalia</taxon>
        <taxon>Eutheria</taxon>
        <taxon>Laurasiatheria</taxon>
        <taxon>Carnivora</taxon>
        <taxon>Feliformia</taxon>
        <taxon>Felidae</taxon>
        <taxon>Felinae</taxon>
        <taxon>Felis</taxon>
    </lineage>
</organism>
<accession>O02777</accession>
<keyword id="KW-1003">Cell membrane</keyword>
<keyword id="KW-0966">Cell projection</keyword>
<keyword id="KW-0297">G-protein coupled receptor</keyword>
<keyword id="KW-0325">Glycoprotein</keyword>
<keyword id="KW-0449">Lipoprotein</keyword>
<keyword id="KW-0472">Membrane</keyword>
<keyword id="KW-0496">Mitochondrion</keyword>
<keyword id="KW-1000">Mitochondrion outer membrane</keyword>
<keyword id="KW-0564">Palmitate</keyword>
<keyword id="KW-0597">Phosphoprotein</keyword>
<keyword id="KW-0675">Receptor</keyword>
<keyword id="KW-1185">Reference proteome</keyword>
<keyword id="KW-0770">Synapse</keyword>
<keyword id="KW-0807">Transducer</keyword>
<keyword id="KW-0812">Transmembrane</keyword>
<keyword id="KW-1133">Transmembrane helix</keyword>
<gene>
    <name type="primary">CNR1</name>
</gene>
<feature type="chain" id="PRO_0000069313" description="Cannabinoid receptor 1">
    <location>
        <begin position="1"/>
        <end position="472"/>
    </location>
</feature>
<feature type="topological domain" description="Extracellular" evidence="2">
    <location>
        <begin position="1"/>
        <end position="116"/>
    </location>
</feature>
<feature type="transmembrane region" description="Helical; Name=1" evidence="2">
    <location>
        <begin position="117"/>
        <end position="142"/>
    </location>
</feature>
<feature type="topological domain" description="Cytoplasmic" evidence="2">
    <location>
        <begin position="143"/>
        <end position="154"/>
    </location>
</feature>
<feature type="transmembrane region" description="Helical; Name=2" evidence="2">
    <location>
        <begin position="155"/>
        <end position="175"/>
    </location>
</feature>
<feature type="topological domain" description="Extracellular" evidence="2">
    <location>
        <begin position="176"/>
        <end position="187"/>
    </location>
</feature>
<feature type="transmembrane region" description="Helical; Name=3" evidence="2">
    <location>
        <begin position="188"/>
        <end position="212"/>
    </location>
</feature>
<feature type="topological domain" description="Cytoplasmic" evidence="2">
    <location>
        <begin position="213"/>
        <end position="232"/>
    </location>
</feature>
<feature type="transmembrane region" description="Helical; Name=4" evidence="2">
    <location>
        <begin position="233"/>
        <end position="255"/>
    </location>
</feature>
<feature type="topological domain" description="Extracellular" evidence="2">
    <location>
        <begin position="256"/>
        <end position="273"/>
    </location>
</feature>
<feature type="transmembrane region" description="Helical; Name=5" evidence="2">
    <location>
        <begin position="274"/>
        <end position="299"/>
    </location>
</feature>
<feature type="topological domain" description="Cytoplasmic" evidence="2">
    <location>
        <begin position="300"/>
        <end position="344"/>
    </location>
</feature>
<feature type="transmembrane region" description="Helical; Name=6" evidence="2">
    <location>
        <begin position="345"/>
        <end position="365"/>
    </location>
</feature>
<feature type="topological domain" description="Extracellular" evidence="2">
    <location>
        <begin position="366"/>
        <end position="377"/>
    </location>
</feature>
<feature type="transmembrane region" description="Helical; Name=7" evidence="2">
    <location>
        <begin position="378"/>
        <end position="399"/>
    </location>
</feature>
<feature type="topological domain" description="Cytoplasmic" evidence="2">
    <location>
        <begin position="400"/>
        <end position="472"/>
    </location>
</feature>
<feature type="region of interest" description="Required for mitochondrial localization" evidence="3">
    <location>
        <begin position="2"/>
        <end position="23"/>
    </location>
</feature>
<feature type="modified residue" description="Phosphoserine" evidence="3">
    <location>
        <position position="425"/>
    </location>
</feature>
<feature type="modified residue" description="Phosphoserine" evidence="3">
    <location>
        <position position="429"/>
    </location>
</feature>
<feature type="lipid moiety-binding region" description="S-palmitoyl cysteine" evidence="2">
    <location>
        <position position="415"/>
    </location>
</feature>
<feature type="glycosylation site" description="N-linked (GlcNAc...) asparagine" evidence="4">
    <location>
        <position position="77"/>
    </location>
</feature>
<feature type="glycosylation site" description="N-linked (GlcNAc...) asparagine" evidence="4">
    <location>
        <position position="83"/>
    </location>
</feature>
<evidence type="ECO:0000250" key="1">
    <source>
        <dbReference type="UniProtKB" id="P20272"/>
    </source>
</evidence>
<evidence type="ECO:0000250" key="2">
    <source>
        <dbReference type="UniProtKB" id="P21554"/>
    </source>
</evidence>
<evidence type="ECO:0000250" key="3">
    <source>
        <dbReference type="UniProtKB" id="P47746"/>
    </source>
</evidence>
<evidence type="ECO:0000255" key="4"/>
<evidence type="ECO:0000255" key="5">
    <source>
        <dbReference type="PROSITE-ProRule" id="PRU00521"/>
    </source>
</evidence>
<evidence type="ECO:0000269" key="6">
    <source>
    </source>
</evidence>
<dbReference type="EMBL" id="U94342">
    <property type="protein sequence ID" value="AAB53440.1"/>
    <property type="molecule type" value="mRNA"/>
</dbReference>
<dbReference type="RefSeq" id="NP_001009331.1">
    <property type="nucleotide sequence ID" value="NM_001009331.1"/>
</dbReference>
<dbReference type="SMR" id="O02777"/>
<dbReference type="GlyCosmos" id="O02777">
    <property type="glycosylation" value="2 sites, No reported glycans"/>
</dbReference>
<dbReference type="PaxDb" id="9685-ENSFCAP00000011905"/>
<dbReference type="GeneID" id="493926"/>
<dbReference type="KEGG" id="fca:493926"/>
<dbReference type="CTD" id="1268"/>
<dbReference type="eggNOG" id="KOG3656">
    <property type="taxonomic scope" value="Eukaryota"/>
</dbReference>
<dbReference type="InParanoid" id="O02777"/>
<dbReference type="OrthoDB" id="5966748at2759"/>
<dbReference type="TreeFam" id="TF330052"/>
<dbReference type="Proteomes" id="UP000011712">
    <property type="component" value="Unplaced"/>
</dbReference>
<dbReference type="GO" id="GO:0030424">
    <property type="term" value="C:axon"/>
    <property type="evidence" value="ECO:0007669"/>
    <property type="project" value="UniProtKB-SubCell"/>
</dbReference>
<dbReference type="GO" id="GO:0005737">
    <property type="term" value="C:cytoplasm"/>
    <property type="evidence" value="ECO:0000318"/>
    <property type="project" value="GO_Central"/>
</dbReference>
<dbReference type="GO" id="GO:0045121">
    <property type="term" value="C:membrane raft"/>
    <property type="evidence" value="ECO:0007669"/>
    <property type="project" value="UniProtKB-SubCell"/>
</dbReference>
<dbReference type="GO" id="GO:0005741">
    <property type="term" value="C:mitochondrial outer membrane"/>
    <property type="evidence" value="ECO:0007669"/>
    <property type="project" value="UniProtKB-SubCell"/>
</dbReference>
<dbReference type="GO" id="GO:0005886">
    <property type="term" value="C:plasma membrane"/>
    <property type="evidence" value="ECO:0000318"/>
    <property type="project" value="GO_Central"/>
</dbReference>
<dbReference type="GO" id="GO:0098793">
    <property type="term" value="C:presynapse"/>
    <property type="evidence" value="ECO:0007669"/>
    <property type="project" value="UniProtKB-SubCell"/>
</dbReference>
<dbReference type="GO" id="GO:0004949">
    <property type="term" value="F:cannabinoid receptor activity"/>
    <property type="evidence" value="ECO:0000250"/>
    <property type="project" value="UniProtKB"/>
</dbReference>
<dbReference type="GO" id="GO:0004930">
    <property type="term" value="F:G protein-coupled receptor activity"/>
    <property type="evidence" value="ECO:0000318"/>
    <property type="project" value="GO_Central"/>
</dbReference>
<dbReference type="GO" id="GO:0007189">
    <property type="term" value="P:adenylate cyclase-activating G protein-coupled receptor signaling pathway"/>
    <property type="evidence" value="ECO:0000318"/>
    <property type="project" value="GO_Central"/>
</dbReference>
<dbReference type="GO" id="GO:0007188">
    <property type="term" value="P:adenylate cyclase-modulating G protein-coupled receptor signaling pathway"/>
    <property type="evidence" value="ECO:0000250"/>
    <property type="project" value="UniProtKB"/>
</dbReference>
<dbReference type="GO" id="GO:0019222">
    <property type="term" value="P:regulation of metabolic process"/>
    <property type="evidence" value="ECO:0000318"/>
    <property type="project" value="GO_Central"/>
</dbReference>
<dbReference type="CDD" id="cd15340">
    <property type="entry name" value="7tmA_CB1"/>
    <property type="match status" value="1"/>
</dbReference>
<dbReference type="FunFam" id="1.20.1070.10:FF:000072">
    <property type="entry name" value="Cannabinoid receptor 1"/>
    <property type="match status" value="1"/>
</dbReference>
<dbReference type="Gene3D" id="1.20.1070.10">
    <property type="entry name" value="Rhodopsin 7-helix transmembrane proteins"/>
    <property type="match status" value="1"/>
</dbReference>
<dbReference type="InterPro" id="IPR000810">
    <property type="entry name" value="Canbinoid_rcpt_1"/>
</dbReference>
<dbReference type="InterPro" id="IPR002230">
    <property type="entry name" value="Cnbnoid_rcpt"/>
</dbReference>
<dbReference type="InterPro" id="IPR000276">
    <property type="entry name" value="GPCR_Rhodpsn"/>
</dbReference>
<dbReference type="InterPro" id="IPR017452">
    <property type="entry name" value="GPCR_Rhodpsn_7TM"/>
</dbReference>
<dbReference type="PANTHER" id="PTHR22750">
    <property type="entry name" value="G-PROTEIN COUPLED RECEPTOR"/>
    <property type="match status" value="1"/>
</dbReference>
<dbReference type="Pfam" id="PF00001">
    <property type="entry name" value="7tm_1"/>
    <property type="match status" value="1"/>
</dbReference>
<dbReference type="PIRSF" id="PIRSF037995">
    <property type="entry name" value="Cnoid_rcpt_1"/>
    <property type="match status" value="1"/>
</dbReference>
<dbReference type="PRINTS" id="PR00522">
    <property type="entry name" value="CANABINOID1R"/>
</dbReference>
<dbReference type="PRINTS" id="PR00362">
    <property type="entry name" value="CANNABINOIDR"/>
</dbReference>
<dbReference type="PRINTS" id="PR00237">
    <property type="entry name" value="GPCRRHODOPSN"/>
</dbReference>
<dbReference type="SMART" id="SM01381">
    <property type="entry name" value="7TM_GPCR_Srsx"/>
    <property type="match status" value="1"/>
</dbReference>
<dbReference type="SUPFAM" id="SSF81321">
    <property type="entry name" value="Family A G protein-coupled receptor-like"/>
    <property type="match status" value="1"/>
</dbReference>
<dbReference type="PROSITE" id="PS00237">
    <property type="entry name" value="G_PROTEIN_RECEP_F1_1"/>
    <property type="match status" value="1"/>
</dbReference>
<dbReference type="PROSITE" id="PS50262">
    <property type="entry name" value="G_PROTEIN_RECEP_F1_2"/>
    <property type="match status" value="1"/>
</dbReference>
<protein>
    <recommendedName>
        <fullName>Cannabinoid receptor 1</fullName>
        <shortName>CB-R</shortName>
        <shortName>CB1</shortName>
    </recommendedName>
</protein>
<reference key="1">
    <citation type="journal article" date="1999" name="Am. J. Physiol.">
        <title>Cannabinoid CB1 receptor of cat cerebral arterial muscle functions to inhibit L-type Ca2+ channel current.</title>
        <authorList>
            <person name="Gebremedhin D."/>
            <person name="Lange A.R."/>
            <person name="Campbell W.B."/>
            <person name="Hillard C.J."/>
            <person name="Harder D.R."/>
        </authorList>
    </citation>
    <scope>NUCLEOTIDE SEQUENCE [MRNA]</scope>
    <scope>FUNCTION</scope>
    <scope>TISSUE SPECIFICITY</scope>
    <source>
        <tissue>Cerebral vascular smooth muscle</tissue>
    </source>
</reference>